<reference key="1">
    <citation type="journal article" date="2015" name="Genome Announc.">
        <title>Complete Genome Sequence of Methanosphaerula palustris E1-9CT, a Hydrogenotrophic Methanogen Isolated from a Minerotrophic Fen Peatland.</title>
        <authorList>
            <person name="Cadillo-Quiroz H."/>
            <person name="Browne P."/>
            <person name="Kyrpides N."/>
            <person name="Woyke T."/>
            <person name="Goodwin L."/>
            <person name="Detter C."/>
            <person name="Yavitt J.B."/>
            <person name="Zinder S.H."/>
        </authorList>
    </citation>
    <scope>NUCLEOTIDE SEQUENCE [LARGE SCALE GENOMIC DNA]</scope>
    <source>
        <strain>ATCC BAA-1556 / DSM 19958 / E1-9c</strain>
    </source>
</reference>
<protein>
    <recommendedName>
        <fullName evidence="1">Bifunctional enzyme Fae/Hps</fullName>
    </recommendedName>
    <domain>
        <recommendedName>
            <fullName evidence="1">5,6,7,8-tetrahydromethanopterin hydro-lyase</fullName>
            <ecNumber evidence="1">4.2.1.147</ecNumber>
        </recommendedName>
        <alternativeName>
            <fullName evidence="1">Formaldehyde-activating enzyme</fullName>
            <shortName evidence="1">Fae</shortName>
        </alternativeName>
    </domain>
    <domain>
        <recommendedName>
            <fullName evidence="1">3-hexulose-6-phosphate synthase</fullName>
            <shortName evidence="1">HPS</shortName>
            <ecNumber evidence="1">4.1.2.43</ecNumber>
        </recommendedName>
        <alternativeName>
            <fullName evidence="1">D-arabino-3-hexulose-6-phosphate formaldehyde lyase</fullName>
        </alternativeName>
    </domain>
</protein>
<proteinExistence type="inferred from homology"/>
<sequence length="393" mass="42572">MYQIGEALVGDGAELAHIDLIIGEKSGPVGIAFANGLSQLSAGHTPLLAVIRPNLLTKPATLIIPKVTLKNQTQVTEMFGPVQAAIAKGIADCIEEGTFKEYDIEDLVILASVYLAPEAKDYNKIYRYNYGAIKLALNRALEGFPPEKTILYEKDRGAHAVMGFKVQRLWDAPYLQVAMDLVDMGKVAKVLKEVPDNDHVIIEAGTPLIKRFGLSVISEIRKLRPNAFIIADMKILDTGNLESRMAADASADAVVISGLAPASTIEKAIEETKKTGIYSIIDMLNVPNPVELIASLKIKPDIVELHRAIDCETSCHAWGDIVAIKKAAGGKLLVATAGGVRVEVVKEALASGADILVVGRAITASKDIRHATEEFLEQLHKDEIDQFRVMTDF</sequence>
<feature type="chain" id="PRO_1000165143" description="Bifunctional enzyme Fae/Hps">
    <location>
        <begin position="1"/>
        <end position="393"/>
    </location>
</feature>
<feature type="region of interest" description="Formaldehyde-activating enzyme" evidence="1">
    <location>
        <begin position="1"/>
        <end position="161"/>
    </location>
</feature>
<feature type="region of interest" description="3-hexulose-6-phosphate synthase" evidence="1">
    <location>
        <begin position="162"/>
        <end position="393"/>
    </location>
</feature>
<feature type="active site" description="Proton donor" evidence="1">
    <location>
        <position position="17"/>
    </location>
</feature>
<feature type="binding site" evidence="1">
    <location>
        <position position="19"/>
    </location>
    <ligand>
        <name>substrate</name>
    </ligand>
</feature>
<feature type="binding site" evidence="1">
    <location>
        <position position="48"/>
    </location>
    <ligand>
        <name>substrate</name>
    </ligand>
</feature>
<feature type="binding site" evidence="1">
    <location>
        <position position="66"/>
    </location>
    <ligand>
        <name>substrate</name>
    </ligand>
</feature>
<feature type="binding site" evidence="1">
    <location>
        <position position="68"/>
    </location>
    <ligand>
        <name>substrate</name>
    </ligand>
</feature>
<feature type="binding site" evidence="1">
    <location>
        <position position="83"/>
    </location>
    <ligand>
        <name>substrate</name>
    </ligand>
</feature>
<keyword id="KW-0119">Carbohydrate metabolism</keyword>
<keyword id="KW-0456">Lyase</keyword>
<keyword id="KW-0511">Multifunctional enzyme</keyword>
<keyword id="KW-1185">Reference proteome</keyword>
<organism>
    <name type="scientific">Methanosphaerula palustris (strain ATCC BAA-1556 / DSM 19958 / E1-9c)</name>
    <dbReference type="NCBI Taxonomy" id="521011"/>
    <lineage>
        <taxon>Archaea</taxon>
        <taxon>Methanobacteriati</taxon>
        <taxon>Methanobacteriota</taxon>
        <taxon>Stenosarchaea group</taxon>
        <taxon>Methanomicrobia</taxon>
        <taxon>Methanomicrobiales</taxon>
        <taxon>Methanoregulaceae</taxon>
        <taxon>Methanosphaerula</taxon>
    </lineage>
</organism>
<dbReference type="EC" id="4.2.1.147" evidence="1"/>
<dbReference type="EC" id="4.1.2.43" evidence="1"/>
<dbReference type="EMBL" id="CP001338">
    <property type="protein sequence ID" value="ACL16384.1"/>
    <property type="molecule type" value="Genomic_DNA"/>
</dbReference>
<dbReference type="RefSeq" id="WP_012617703.1">
    <property type="nucleotide sequence ID" value="NC_011832.1"/>
</dbReference>
<dbReference type="SMR" id="B8GGX9"/>
<dbReference type="STRING" id="521011.Mpal_1036"/>
<dbReference type="GeneID" id="7271770"/>
<dbReference type="KEGG" id="mpl:Mpal_1036"/>
<dbReference type="eggNOG" id="arCOG00103">
    <property type="taxonomic scope" value="Archaea"/>
</dbReference>
<dbReference type="HOGENOM" id="CLU_701335_0_0_2"/>
<dbReference type="OrthoDB" id="64276at2157"/>
<dbReference type="UniPathway" id="UPA00293"/>
<dbReference type="Proteomes" id="UP000002457">
    <property type="component" value="Chromosome"/>
</dbReference>
<dbReference type="GO" id="GO:0033982">
    <property type="term" value="F:3-dehydro-L-gulonate-6-phosphate decarboxylase activity"/>
    <property type="evidence" value="ECO:0007669"/>
    <property type="project" value="TreeGrafter"/>
</dbReference>
<dbReference type="GO" id="GO:0016840">
    <property type="term" value="F:carbon-nitrogen lyase activity"/>
    <property type="evidence" value="ECO:0007669"/>
    <property type="project" value="InterPro"/>
</dbReference>
<dbReference type="GO" id="GO:0043801">
    <property type="term" value="F:hexulose-6-phosphate synthase activity"/>
    <property type="evidence" value="ECO:0007669"/>
    <property type="project" value="UniProtKB-UniRule"/>
</dbReference>
<dbReference type="GO" id="GO:0016836">
    <property type="term" value="F:hydro-lyase activity"/>
    <property type="evidence" value="ECO:0007669"/>
    <property type="project" value="UniProtKB-UniRule"/>
</dbReference>
<dbReference type="GO" id="GO:0004590">
    <property type="term" value="F:orotidine-5'-phosphate decarboxylase activity"/>
    <property type="evidence" value="ECO:0007669"/>
    <property type="project" value="InterPro"/>
</dbReference>
<dbReference type="GO" id="GO:0006207">
    <property type="term" value="P:'de novo' pyrimidine nucleobase biosynthetic process"/>
    <property type="evidence" value="ECO:0007669"/>
    <property type="project" value="InterPro"/>
</dbReference>
<dbReference type="GO" id="GO:0016051">
    <property type="term" value="P:carbohydrate biosynthetic process"/>
    <property type="evidence" value="ECO:0007669"/>
    <property type="project" value="UniProtKB-UniRule"/>
</dbReference>
<dbReference type="GO" id="GO:0019854">
    <property type="term" value="P:L-ascorbic acid catabolic process"/>
    <property type="evidence" value="ECO:0007669"/>
    <property type="project" value="TreeGrafter"/>
</dbReference>
<dbReference type="CDD" id="cd04726">
    <property type="entry name" value="KGPDC_HPS"/>
    <property type="match status" value="1"/>
</dbReference>
<dbReference type="FunFam" id="3.20.20.70:FF:000022">
    <property type="entry name" value="3-keto-L-gulonate-6-phosphate decarboxylase UlaD"/>
    <property type="match status" value="1"/>
</dbReference>
<dbReference type="FunFam" id="3.30.230.60:FF:000001">
    <property type="entry name" value="5,6,7,8-tetrahydromethanopterin hydro-lyase"/>
    <property type="match status" value="1"/>
</dbReference>
<dbReference type="Gene3D" id="3.20.20.70">
    <property type="entry name" value="Aldolase class I"/>
    <property type="match status" value="1"/>
</dbReference>
<dbReference type="Gene3D" id="3.30.230.60">
    <property type="entry name" value="Formaldehyde-activating enzyme"/>
    <property type="match status" value="1"/>
</dbReference>
<dbReference type="HAMAP" id="MF_01268">
    <property type="entry name" value="Fae_Hps"/>
    <property type="match status" value="1"/>
</dbReference>
<dbReference type="InterPro" id="IPR013785">
    <property type="entry name" value="Aldolase_TIM"/>
</dbReference>
<dbReference type="InterPro" id="IPR020868">
    <property type="entry name" value="Fae/Hps"/>
</dbReference>
<dbReference type="InterPro" id="IPR014826">
    <property type="entry name" value="HCHO-activating_enzyme"/>
</dbReference>
<dbReference type="InterPro" id="IPR037075">
    <property type="entry name" value="HCHO-activating_enzyme_sf"/>
</dbReference>
<dbReference type="InterPro" id="IPR041710">
    <property type="entry name" value="HPS/KGPDC"/>
</dbReference>
<dbReference type="InterPro" id="IPR001754">
    <property type="entry name" value="OMPdeCOase_dom"/>
</dbReference>
<dbReference type="InterPro" id="IPR020568">
    <property type="entry name" value="Ribosomal_Su5_D2-typ_SF"/>
</dbReference>
<dbReference type="InterPro" id="IPR011060">
    <property type="entry name" value="RibuloseP-bd_barrel"/>
</dbReference>
<dbReference type="NCBIfam" id="TIGR03126">
    <property type="entry name" value="one_C_fae"/>
    <property type="match status" value="1"/>
</dbReference>
<dbReference type="NCBIfam" id="NF009833">
    <property type="entry name" value="PRK13307.1"/>
    <property type="match status" value="1"/>
</dbReference>
<dbReference type="PANTHER" id="PTHR35039">
    <property type="entry name" value="3-KETO-L-GULONATE-6-PHOSPHATE DECARBOXYLASE SGBH-RELATED"/>
    <property type="match status" value="1"/>
</dbReference>
<dbReference type="PANTHER" id="PTHR35039:SF3">
    <property type="entry name" value="3-KETO-L-GULONATE-6-PHOSPHATE DECARBOXYLASE SGBH-RELATED"/>
    <property type="match status" value="1"/>
</dbReference>
<dbReference type="Pfam" id="PF08714">
    <property type="entry name" value="Fae"/>
    <property type="match status" value="1"/>
</dbReference>
<dbReference type="Pfam" id="PF00215">
    <property type="entry name" value="OMPdecase"/>
    <property type="match status" value="1"/>
</dbReference>
<dbReference type="SMART" id="SM00934">
    <property type="entry name" value="OMPdecase"/>
    <property type="match status" value="1"/>
</dbReference>
<dbReference type="SUPFAM" id="SSF54211">
    <property type="entry name" value="Ribosomal protein S5 domain 2-like"/>
    <property type="match status" value="1"/>
</dbReference>
<dbReference type="SUPFAM" id="SSF51366">
    <property type="entry name" value="Ribulose-phoshate binding barrel"/>
    <property type="match status" value="1"/>
</dbReference>
<accession>B8GGX9</accession>
<gene>
    <name evidence="1" type="primary">fae-hps</name>
    <name type="ordered locus">Mpal_1036</name>
</gene>
<comment type="function">
    <text evidence="1">Catalyzes the condensation of formaldehyde with tetrahydromethanopterin (H(4)MPT) to 5,10-methylenetetrahydromethanopterin.</text>
</comment>
<comment type="function">
    <text evidence="1">Catalyzes the reversible formation of ribulose-5-phosphate and formaldehyde from 3-hexulose-6-phosphate.</text>
</comment>
<comment type="catalytic activity">
    <reaction evidence="1">
        <text>5,6,7,8-tetrahydromethanopterin + formaldehyde = 5,10-methylenetetrahydromethanopterin + H2O</text>
        <dbReference type="Rhea" id="RHEA:24678"/>
        <dbReference type="ChEBI" id="CHEBI:15377"/>
        <dbReference type="ChEBI" id="CHEBI:16842"/>
        <dbReference type="ChEBI" id="CHEBI:57818"/>
        <dbReference type="ChEBI" id="CHEBI:58103"/>
        <dbReference type="EC" id="4.2.1.147"/>
    </reaction>
</comment>
<comment type="catalytic activity">
    <reaction evidence="1">
        <text>D-ribulose 5-phosphate + formaldehyde = D-arabino-hex-3-ulose 6-phosphate</text>
        <dbReference type="Rhea" id="RHEA:25201"/>
        <dbReference type="ChEBI" id="CHEBI:16842"/>
        <dbReference type="ChEBI" id="CHEBI:58121"/>
        <dbReference type="ChEBI" id="CHEBI:58542"/>
        <dbReference type="EC" id="4.1.2.43"/>
    </reaction>
</comment>
<comment type="pathway">
    <text evidence="1">Carbohydrate biosynthesis; D-ribose 5-phosphate biosynthesis.</text>
</comment>
<comment type="similarity">
    <text evidence="1">In the N-terminal section; belongs to the formaldehyde-activating enzyme family.</text>
</comment>
<comment type="similarity">
    <text evidence="1">In the C-terminal section; belongs to the HPS/KGPDC family. HPS subfamily.</text>
</comment>
<evidence type="ECO:0000255" key="1">
    <source>
        <dbReference type="HAMAP-Rule" id="MF_01268"/>
    </source>
</evidence>
<name>FAEHP_METPE</name>